<accession>Q99JY9</accession>
<accession>Q9DC56</accession>
<proteinExistence type="evidence at protein level"/>
<evidence type="ECO:0000250" key="1">
    <source>
        <dbReference type="UniProtKB" id="P61158"/>
    </source>
</evidence>
<evidence type="ECO:0000269" key="2">
    <source>
    </source>
</evidence>
<evidence type="ECO:0000305" key="3"/>
<evidence type="ECO:0007744" key="4">
    <source>
    </source>
</evidence>
<organism>
    <name type="scientific">Mus musculus</name>
    <name type="common">Mouse</name>
    <dbReference type="NCBI Taxonomy" id="10090"/>
    <lineage>
        <taxon>Eukaryota</taxon>
        <taxon>Metazoa</taxon>
        <taxon>Chordata</taxon>
        <taxon>Craniata</taxon>
        <taxon>Vertebrata</taxon>
        <taxon>Euteleostomi</taxon>
        <taxon>Mammalia</taxon>
        <taxon>Eutheria</taxon>
        <taxon>Euarchontoglires</taxon>
        <taxon>Glires</taxon>
        <taxon>Rodentia</taxon>
        <taxon>Myomorpha</taxon>
        <taxon>Muroidea</taxon>
        <taxon>Muridae</taxon>
        <taxon>Murinae</taxon>
        <taxon>Mus</taxon>
        <taxon>Mus</taxon>
    </lineage>
</organism>
<reference key="1">
    <citation type="journal article" date="2005" name="Science">
        <title>The transcriptional landscape of the mammalian genome.</title>
        <authorList>
            <person name="Carninci P."/>
            <person name="Kasukawa T."/>
            <person name="Katayama S."/>
            <person name="Gough J."/>
            <person name="Frith M.C."/>
            <person name="Maeda N."/>
            <person name="Oyama R."/>
            <person name="Ravasi T."/>
            <person name="Lenhard B."/>
            <person name="Wells C."/>
            <person name="Kodzius R."/>
            <person name="Shimokawa K."/>
            <person name="Bajic V.B."/>
            <person name="Brenner S.E."/>
            <person name="Batalov S."/>
            <person name="Forrest A.R."/>
            <person name="Zavolan M."/>
            <person name="Davis M.J."/>
            <person name="Wilming L.G."/>
            <person name="Aidinis V."/>
            <person name="Allen J.E."/>
            <person name="Ambesi-Impiombato A."/>
            <person name="Apweiler R."/>
            <person name="Aturaliya R.N."/>
            <person name="Bailey T.L."/>
            <person name="Bansal M."/>
            <person name="Baxter L."/>
            <person name="Beisel K.W."/>
            <person name="Bersano T."/>
            <person name="Bono H."/>
            <person name="Chalk A.M."/>
            <person name="Chiu K.P."/>
            <person name="Choudhary V."/>
            <person name="Christoffels A."/>
            <person name="Clutterbuck D.R."/>
            <person name="Crowe M.L."/>
            <person name="Dalla E."/>
            <person name="Dalrymple B.P."/>
            <person name="de Bono B."/>
            <person name="Della Gatta G."/>
            <person name="di Bernardo D."/>
            <person name="Down T."/>
            <person name="Engstrom P."/>
            <person name="Fagiolini M."/>
            <person name="Faulkner G."/>
            <person name="Fletcher C.F."/>
            <person name="Fukushima T."/>
            <person name="Furuno M."/>
            <person name="Futaki S."/>
            <person name="Gariboldi M."/>
            <person name="Georgii-Hemming P."/>
            <person name="Gingeras T.R."/>
            <person name="Gojobori T."/>
            <person name="Green R.E."/>
            <person name="Gustincich S."/>
            <person name="Harbers M."/>
            <person name="Hayashi Y."/>
            <person name="Hensch T.K."/>
            <person name="Hirokawa N."/>
            <person name="Hill D."/>
            <person name="Huminiecki L."/>
            <person name="Iacono M."/>
            <person name="Ikeo K."/>
            <person name="Iwama A."/>
            <person name="Ishikawa T."/>
            <person name="Jakt M."/>
            <person name="Kanapin A."/>
            <person name="Katoh M."/>
            <person name="Kawasawa Y."/>
            <person name="Kelso J."/>
            <person name="Kitamura H."/>
            <person name="Kitano H."/>
            <person name="Kollias G."/>
            <person name="Krishnan S.P."/>
            <person name="Kruger A."/>
            <person name="Kummerfeld S.K."/>
            <person name="Kurochkin I.V."/>
            <person name="Lareau L.F."/>
            <person name="Lazarevic D."/>
            <person name="Lipovich L."/>
            <person name="Liu J."/>
            <person name="Liuni S."/>
            <person name="McWilliam S."/>
            <person name="Madan Babu M."/>
            <person name="Madera M."/>
            <person name="Marchionni L."/>
            <person name="Matsuda H."/>
            <person name="Matsuzawa S."/>
            <person name="Miki H."/>
            <person name="Mignone F."/>
            <person name="Miyake S."/>
            <person name="Morris K."/>
            <person name="Mottagui-Tabar S."/>
            <person name="Mulder N."/>
            <person name="Nakano N."/>
            <person name="Nakauchi H."/>
            <person name="Ng P."/>
            <person name="Nilsson R."/>
            <person name="Nishiguchi S."/>
            <person name="Nishikawa S."/>
            <person name="Nori F."/>
            <person name="Ohara O."/>
            <person name="Okazaki Y."/>
            <person name="Orlando V."/>
            <person name="Pang K.C."/>
            <person name="Pavan W.J."/>
            <person name="Pavesi G."/>
            <person name="Pesole G."/>
            <person name="Petrovsky N."/>
            <person name="Piazza S."/>
            <person name="Reed J."/>
            <person name="Reid J.F."/>
            <person name="Ring B.Z."/>
            <person name="Ringwald M."/>
            <person name="Rost B."/>
            <person name="Ruan Y."/>
            <person name="Salzberg S.L."/>
            <person name="Sandelin A."/>
            <person name="Schneider C."/>
            <person name="Schoenbach C."/>
            <person name="Sekiguchi K."/>
            <person name="Semple C.A."/>
            <person name="Seno S."/>
            <person name="Sessa L."/>
            <person name="Sheng Y."/>
            <person name="Shibata Y."/>
            <person name="Shimada H."/>
            <person name="Shimada K."/>
            <person name="Silva D."/>
            <person name="Sinclair B."/>
            <person name="Sperling S."/>
            <person name="Stupka E."/>
            <person name="Sugiura K."/>
            <person name="Sultana R."/>
            <person name="Takenaka Y."/>
            <person name="Taki K."/>
            <person name="Tammoja K."/>
            <person name="Tan S.L."/>
            <person name="Tang S."/>
            <person name="Taylor M.S."/>
            <person name="Tegner J."/>
            <person name="Teichmann S.A."/>
            <person name="Ueda H.R."/>
            <person name="van Nimwegen E."/>
            <person name="Verardo R."/>
            <person name="Wei C.L."/>
            <person name="Yagi K."/>
            <person name="Yamanishi H."/>
            <person name="Zabarovsky E."/>
            <person name="Zhu S."/>
            <person name="Zimmer A."/>
            <person name="Hide W."/>
            <person name="Bult C."/>
            <person name="Grimmond S.M."/>
            <person name="Teasdale R.D."/>
            <person name="Liu E.T."/>
            <person name="Brusic V."/>
            <person name="Quackenbush J."/>
            <person name="Wahlestedt C."/>
            <person name="Mattick J.S."/>
            <person name="Hume D.A."/>
            <person name="Kai C."/>
            <person name="Sasaki D."/>
            <person name="Tomaru Y."/>
            <person name="Fukuda S."/>
            <person name="Kanamori-Katayama M."/>
            <person name="Suzuki M."/>
            <person name="Aoki J."/>
            <person name="Arakawa T."/>
            <person name="Iida J."/>
            <person name="Imamura K."/>
            <person name="Itoh M."/>
            <person name="Kato T."/>
            <person name="Kawaji H."/>
            <person name="Kawagashira N."/>
            <person name="Kawashima T."/>
            <person name="Kojima M."/>
            <person name="Kondo S."/>
            <person name="Konno H."/>
            <person name="Nakano K."/>
            <person name="Ninomiya N."/>
            <person name="Nishio T."/>
            <person name="Okada M."/>
            <person name="Plessy C."/>
            <person name="Shibata K."/>
            <person name="Shiraki T."/>
            <person name="Suzuki S."/>
            <person name="Tagami M."/>
            <person name="Waki K."/>
            <person name="Watahiki A."/>
            <person name="Okamura-Oho Y."/>
            <person name="Suzuki H."/>
            <person name="Kawai J."/>
            <person name="Hayashizaki Y."/>
        </authorList>
    </citation>
    <scope>NUCLEOTIDE SEQUENCE [LARGE SCALE MRNA]</scope>
    <source>
        <strain>C57BL/6J</strain>
        <tissue>Lung</tissue>
        <tissue>Thymus</tissue>
    </source>
</reference>
<reference key="2">
    <citation type="journal article" date="2004" name="Genome Res.">
        <title>The status, quality, and expansion of the NIH full-length cDNA project: the Mammalian Gene Collection (MGC).</title>
        <authorList>
            <consortium name="The MGC Project Team"/>
        </authorList>
    </citation>
    <scope>NUCLEOTIDE SEQUENCE [LARGE SCALE MRNA]</scope>
    <source>
        <tissue>Mammary gland</tissue>
    </source>
</reference>
<reference key="3">
    <citation type="submission" date="2007-03" db="UniProtKB">
        <authorList>
            <person name="Lubec G."/>
            <person name="Klug S."/>
        </authorList>
    </citation>
    <scope>PROTEIN SEQUENCE OF 103-123 AND 199-219</scope>
    <scope>IDENTIFICATION BY MASS SPECTROMETRY</scope>
    <source>
        <tissue>Hippocampus</tissue>
    </source>
</reference>
<reference key="4">
    <citation type="journal article" date="2010" name="Cell">
        <title>A tissue-specific atlas of mouse protein phosphorylation and expression.</title>
        <authorList>
            <person name="Huttlin E.L."/>
            <person name="Jedrychowski M.P."/>
            <person name="Elias J.E."/>
            <person name="Goswami T."/>
            <person name="Rad R."/>
            <person name="Beausoleil S.A."/>
            <person name="Villen J."/>
            <person name="Haas W."/>
            <person name="Sowa M.E."/>
            <person name="Gygi S.P."/>
        </authorList>
    </citation>
    <scope>IDENTIFICATION BY MASS SPECTROMETRY [LARGE SCALE ANALYSIS]</scope>
    <source>
        <tissue>Brain</tissue>
        <tissue>Brown adipose tissue</tissue>
        <tissue>Heart</tissue>
        <tissue>Kidney</tissue>
        <tissue>Liver</tissue>
        <tissue>Lung</tissue>
        <tissue>Pancreas</tissue>
        <tissue>Spleen</tissue>
        <tissue>Testis</tissue>
    </source>
</reference>
<reference key="5">
    <citation type="journal article" date="2013" name="Mol. Cell">
        <title>SIRT5-mediated lysine desuccinylation impacts diverse metabolic pathways.</title>
        <authorList>
            <person name="Park J."/>
            <person name="Chen Y."/>
            <person name="Tishkoff D.X."/>
            <person name="Peng C."/>
            <person name="Tan M."/>
            <person name="Dai L."/>
            <person name="Xie Z."/>
            <person name="Zhang Y."/>
            <person name="Zwaans B.M."/>
            <person name="Skinner M.E."/>
            <person name="Lombard D.B."/>
            <person name="Zhao Y."/>
        </authorList>
    </citation>
    <scope>ACETYLATION [LARGE SCALE ANALYSIS] AT LYS-244</scope>
    <scope>IDENTIFICATION BY MASS SPECTROMETRY [LARGE SCALE ANALYSIS]</scope>
    <source>
        <tissue>Embryonic fibroblast</tissue>
    </source>
</reference>
<reference key="6">
    <citation type="journal article" date="2010" name="J. Bacteriol.">
        <title>Actin-based motility of Burkholderia thailandensis requires a central acidic domain of BimA that recruits and activates the cellular Arp2/3 complex.</title>
        <authorList>
            <person name="Sitthidet C."/>
            <person name="Stevens J.M."/>
            <person name="Field T.R."/>
            <person name="Layton A.N."/>
            <person name="Korbsrisate S."/>
            <person name="Stevens M.P."/>
        </authorList>
    </citation>
    <scope>INTERACTION WITH B.THAILANDENSIS BIMA (MICROBIAL INFECTION)</scope>
</reference>
<sequence length="418" mass="47357">MAGRLPACVVDCGTGYTKLGYAGNTEPQFIIPSCIAIKESAKVGDQAQRRVMKGVDDLDFFIGDEAIEKPTYATKWPIRHGIVEDWDLMERFMEQVIFKYLRAEPEDHYFLLTEPPLNTPENREYTAEIMFESFNVPGLYIAVQAVLALAASWTSRQVGERTLTGTVIDSGDGVTHVIPVAEGYVIGSCIKHIPIAGRDITYFIQQLLRDREVGIPPEQSLETAKAVKERYSYVCPDLVKEFNKYDTDGSKWIKQYTGVNAISKKEFSIDVGYERFLGPEIFFHPEFANPDFTQPISEVVDEVIQNCPIDVRRPLYKNIVLSGGSTMFRDFGRRLQRDLKRTVDARLKLSEELSGGRLKPKPIDVQVITHHMQRYAVWFGGSMLASTPEFYQVCHTKKDYEEIGPSICRHNPVFGVMS</sequence>
<gene>
    <name type="primary">Actr3</name>
    <name type="synonym">Arp3</name>
</gene>
<protein>
    <recommendedName>
        <fullName>Actin-related protein 3</fullName>
    </recommendedName>
    <alternativeName>
        <fullName>Actin-like protein 3</fullName>
    </alternativeName>
</protein>
<dbReference type="EMBL" id="AK004554">
    <property type="protein sequence ID" value="BAB23368.1"/>
    <property type="molecule type" value="mRNA"/>
</dbReference>
<dbReference type="EMBL" id="AK083343">
    <property type="protein sequence ID" value="BAC38876.1"/>
    <property type="molecule type" value="mRNA"/>
</dbReference>
<dbReference type="EMBL" id="BC005557">
    <property type="protein sequence ID" value="AAH05557.1"/>
    <property type="molecule type" value="mRNA"/>
</dbReference>
<dbReference type="EMBL" id="BC080806">
    <property type="protein sequence ID" value="AAH80806.1"/>
    <property type="molecule type" value="mRNA"/>
</dbReference>
<dbReference type="CCDS" id="CCDS15242.1"/>
<dbReference type="RefSeq" id="NP_001192314.1">
    <property type="nucleotide sequence ID" value="NM_001205385.1"/>
</dbReference>
<dbReference type="RefSeq" id="NP_001192315.1">
    <property type="nucleotide sequence ID" value="NM_001205386.1"/>
</dbReference>
<dbReference type="RefSeq" id="NP_076224.1">
    <property type="nucleotide sequence ID" value="NM_023735.2"/>
</dbReference>
<dbReference type="PDB" id="7AQK">
    <property type="method" value="EM"/>
    <property type="resolution" value="9.00 A"/>
    <property type="chains" value="a=1-418"/>
</dbReference>
<dbReference type="PDBsum" id="7AQK"/>
<dbReference type="EMDB" id="EMD-11869"/>
<dbReference type="SMR" id="Q99JY9"/>
<dbReference type="BioGRID" id="216504">
    <property type="interactions" value="37"/>
</dbReference>
<dbReference type="FunCoup" id="Q99JY9">
    <property type="interactions" value="2997"/>
</dbReference>
<dbReference type="IntAct" id="Q99JY9">
    <property type="interactions" value="11"/>
</dbReference>
<dbReference type="STRING" id="10090.ENSMUSP00000137503"/>
<dbReference type="GlyGen" id="Q99JY9">
    <property type="glycosylation" value="1 site, 1 O-linked glycan (1 site)"/>
</dbReference>
<dbReference type="iPTMnet" id="Q99JY9"/>
<dbReference type="MetOSite" id="Q99JY9"/>
<dbReference type="PhosphoSitePlus" id="Q99JY9"/>
<dbReference type="SwissPalm" id="Q99JY9"/>
<dbReference type="jPOST" id="Q99JY9"/>
<dbReference type="PaxDb" id="10090-ENSMUSP00000137503"/>
<dbReference type="ProteomicsDB" id="282024"/>
<dbReference type="Pumba" id="Q99JY9"/>
<dbReference type="Antibodypedia" id="3913">
    <property type="antibodies" value="346 antibodies from 37 providers"/>
</dbReference>
<dbReference type="DNASU" id="74117"/>
<dbReference type="Ensembl" id="ENSMUST00000027579.17">
    <property type="protein sequence ID" value="ENSMUSP00000027579.11"/>
    <property type="gene ID" value="ENSMUSG00000026341.17"/>
</dbReference>
<dbReference type="Ensembl" id="ENSMUST00000178474.8">
    <property type="protein sequence ID" value="ENSMUSP00000137503.2"/>
    <property type="gene ID" value="ENSMUSG00000026341.17"/>
</dbReference>
<dbReference type="GeneID" id="74117"/>
<dbReference type="KEGG" id="mmu:74117"/>
<dbReference type="UCSC" id="uc007cke.2">
    <property type="organism name" value="mouse"/>
</dbReference>
<dbReference type="AGR" id="MGI:1921367"/>
<dbReference type="CTD" id="10096"/>
<dbReference type="MGI" id="MGI:1921367">
    <property type="gene designation" value="Actr3"/>
</dbReference>
<dbReference type="VEuPathDB" id="HostDB:ENSMUSG00000026341"/>
<dbReference type="eggNOG" id="KOG0678">
    <property type="taxonomic scope" value="Eukaryota"/>
</dbReference>
<dbReference type="GeneTree" id="ENSGT00940000155065"/>
<dbReference type="HOGENOM" id="CLU_027965_3_0_1"/>
<dbReference type="InParanoid" id="Q99JY9"/>
<dbReference type="OMA" id="GIHYPIR"/>
<dbReference type="OrthoDB" id="421448at2759"/>
<dbReference type="PhylomeDB" id="Q99JY9"/>
<dbReference type="TreeFam" id="TF300644"/>
<dbReference type="Reactome" id="R-MMU-2029482">
    <property type="pathway name" value="Regulation of actin dynamics for phagocytic cup formation"/>
</dbReference>
<dbReference type="Reactome" id="R-MMU-3928662">
    <property type="pathway name" value="EPHB-mediated forward signaling"/>
</dbReference>
<dbReference type="Reactome" id="R-MMU-5663213">
    <property type="pathway name" value="RHO GTPases Activate WASPs and WAVEs"/>
</dbReference>
<dbReference type="Reactome" id="R-MMU-8856828">
    <property type="pathway name" value="Clathrin-mediated endocytosis"/>
</dbReference>
<dbReference type="BioGRID-ORCS" id="74117">
    <property type="hits" value="29 hits in 80 CRISPR screens"/>
</dbReference>
<dbReference type="CD-CODE" id="CE726F99">
    <property type="entry name" value="Postsynaptic density"/>
</dbReference>
<dbReference type="ChiTaRS" id="Actr3">
    <property type="organism name" value="mouse"/>
</dbReference>
<dbReference type="PRO" id="PR:Q99JY9"/>
<dbReference type="Proteomes" id="UP000000589">
    <property type="component" value="Chromosome 1"/>
</dbReference>
<dbReference type="RNAct" id="Q99JY9">
    <property type="molecule type" value="protein"/>
</dbReference>
<dbReference type="Bgee" id="ENSMUSG00000026341">
    <property type="expression patterns" value="Expressed in granulocyte and 74 other cell types or tissues"/>
</dbReference>
<dbReference type="ExpressionAtlas" id="Q99JY9">
    <property type="expression patterns" value="baseline and differential"/>
</dbReference>
<dbReference type="GO" id="GO:0005884">
    <property type="term" value="C:actin filament"/>
    <property type="evidence" value="ECO:0007669"/>
    <property type="project" value="Ensembl"/>
</dbReference>
<dbReference type="GO" id="GO:0061831">
    <property type="term" value="C:apical ectoplasmic specialization"/>
    <property type="evidence" value="ECO:0007669"/>
    <property type="project" value="Ensembl"/>
</dbReference>
<dbReference type="GO" id="GO:0061828">
    <property type="term" value="C:apical tubulobulbar complex"/>
    <property type="evidence" value="ECO:0007669"/>
    <property type="project" value="Ensembl"/>
</dbReference>
<dbReference type="GO" id="GO:0005885">
    <property type="term" value="C:Arp2/3 protein complex"/>
    <property type="evidence" value="ECO:0000250"/>
    <property type="project" value="UniProtKB"/>
</dbReference>
<dbReference type="GO" id="GO:0061832">
    <property type="term" value="C:basal ectoplasmic specialization"/>
    <property type="evidence" value="ECO:0007669"/>
    <property type="project" value="Ensembl"/>
</dbReference>
<dbReference type="GO" id="GO:0005903">
    <property type="term" value="C:brush border"/>
    <property type="evidence" value="ECO:0000314"/>
    <property type="project" value="UniProtKB"/>
</dbReference>
<dbReference type="GO" id="GO:0005911">
    <property type="term" value="C:cell-cell junction"/>
    <property type="evidence" value="ECO:0000314"/>
    <property type="project" value="MGI"/>
</dbReference>
<dbReference type="GO" id="GO:0061830">
    <property type="term" value="C:concave side of sperm head"/>
    <property type="evidence" value="ECO:0007669"/>
    <property type="project" value="Ensembl"/>
</dbReference>
<dbReference type="GO" id="GO:0005737">
    <property type="term" value="C:cytoplasm"/>
    <property type="evidence" value="ECO:0000250"/>
    <property type="project" value="UniProtKB"/>
</dbReference>
<dbReference type="GO" id="GO:0060076">
    <property type="term" value="C:excitatory synapse"/>
    <property type="evidence" value="ECO:0007669"/>
    <property type="project" value="Ensembl"/>
</dbReference>
<dbReference type="GO" id="GO:0098978">
    <property type="term" value="C:glutamatergic synapse"/>
    <property type="evidence" value="ECO:0007669"/>
    <property type="project" value="Ensembl"/>
</dbReference>
<dbReference type="GO" id="GO:0000139">
    <property type="term" value="C:Golgi membrane"/>
    <property type="evidence" value="ECO:0007669"/>
    <property type="project" value="Ensembl"/>
</dbReference>
<dbReference type="GO" id="GO:0030056">
    <property type="term" value="C:hemidesmosome"/>
    <property type="evidence" value="ECO:0007669"/>
    <property type="project" value="Ensembl"/>
</dbReference>
<dbReference type="GO" id="GO:0030027">
    <property type="term" value="C:lamellipodium"/>
    <property type="evidence" value="ECO:0000314"/>
    <property type="project" value="MGI"/>
</dbReference>
<dbReference type="GO" id="GO:0061851">
    <property type="term" value="C:leading edge of lamellipodium"/>
    <property type="evidence" value="ECO:0007669"/>
    <property type="project" value="Ensembl"/>
</dbReference>
<dbReference type="GO" id="GO:0005634">
    <property type="term" value="C:nucleus"/>
    <property type="evidence" value="ECO:0000250"/>
    <property type="project" value="UniProtKB"/>
</dbReference>
<dbReference type="GO" id="GO:0048471">
    <property type="term" value="C:perinuclear region of cytoplasm"/>
    <property type="evidence" value="ECO:0007669"/>
    <property type="project" value="Ensembl"/>
</dbReference>
<dbReference type="GO" id="GO:0061825">
    <property type="term" value="C:podosome core"/>
    <property type="evidence" value="ECO:0007669"/>
    <property type="project" value="Ensembl"/>
</dbReference>
<dbReference type="GO" id="GO:0098794">
    <property type="term" value="C:postsynapse"/>
    <property type="evidence" value="ECO:0007669"/>
    <property type="project" value="Ensembl"/>
</dbReference>
<dbReference type="GO" id="GO:0001726">
    <property type="term" value="C:ruffle"/>
    <property type="evidence" value="ECO:0007669"/>
    <property type="project" value="Ensembl"/>
</dbReference>
<dbReference type="GO" id="GO:0035861">
    <property type="term" value="C:site of double-strand break"/>
    <property type="evidence" value="ECO:0000250"/>
    <property type="project" value="UniProtKB"/>
</dbReference>
<dbReference type="GO" id="GO:0051015">
    <property type="term" value="F:actin filament binding"/>
    <property type="evidence" value="ECO:0007669"/>
    <property type="project" value="Ensembl"/>
</dbReference>
<dbReference type="GO" id="GO:0005524">
    <property type="term" value="F:ATP binding"/>
    <property type="evidence" value="ECO:0007669"/>
    <property type="project" value="UniProtKB-KW"/>
</dbReference>
<dbReference type="GO" id="GO:0051117">
    <property type="term" value="F:ATPase binding"/>
    <property type="evidence" value="ECO:0007669"/>
    <property type="project" value="Ensembl"/>
</dbReference>
<dbReference type="GO" id="GO:0005200">
    <property type="term" value="F:structural constituent of cytoskeleton"/>
    <property type="evidence" value="ECO:0007669"/>
    <property type="project" value="Ensembl"/>
</dbReference>
<dbReference type="GO" id="GO:0034314">
    <property type="term" value="P:Arp2/3 complex-mediated actin nucleation"/>
    <property type="evidence" value="ECO:0000250"/>
    <property type="project" value="UniProtKB"/>
</dbReference>
<dbReference type="GO" id="GO:0048708">
    <property type="term" value="P:astrocyte differentiation"/>
    <property type="evidence" value="ECO:0007669"/>
    <property type="project" value="Ensembl"/>
</dbReference>
<dbReference type="GO" id="GO:0008356">
    <property type="term" value="P:asymmetric cell division"/>
    <property type="evidence" value="ECO:0000316"/>
    <property type="project" value="MGI"/>
</dbReference>
<dbReference type="GO" id="GO:0071364">
    <property type="term" value="P:cellular response to epidermal growth factor stimulus"/>
    <property type="evidence" value="ECO:0007669"/>
    <property type="project" value="Ensembl"/>
</dbReference>
<dbReference type="GO" id="GO:0071347">
    <property type="term" value="P:cellular response to interleukin-1"/>
    <property type="evidence" value="ECO:0007669"/>
    <property type="project" value="Ensembl"/>
</dbReference>
<dbReference type="GO" id="GO:1905835">
    <property type="term" value="P:cellular response to pyrimidine ribonucleotide"/>
    <property type="evidence" value="ECO:0007669"/>
    <property type="project" value="Ensembl"/>
</dbReference>
<dbReference type="GO" id="GO:0071560">
    <property type="term" value="P:cellular response to transforming growth factor beta stimulus"/>
    <property type="evidence" value="ECO:0007669"/>
    <property type="project" value="Ensembl"/>
</dbReference>
<dbReference type="GO" id="GO:0035984">
    <property type="term" value="P:cellular response to trichostatin A"/>
    <property type="evidence" value="ECO:0007669"/>
    <property type="project" value="Ensembl"/>
</dbReference>
<dbReference type="GO" id="GO:1905837">
    <property type="term" value="P:cellular response to triterpenoid"/>
    <property type="evidence" value="ECO:0007669"/>
    <property type="project" value="Ensembl"/>
</dbReference>
<dbReference type="GO" id="GO:0071356">
    <property type="term" value="P:cellular response to tumor necrosis factor"/>
    <property type="evidence" value="ECO:0007669"/>
    <property type="project" value="Ensembl"/>
</dbReference>
<dbReference type="GO" id="GO:0071346">
    <property type="term" value="P:cellular response to type II interferon"/>
    <property type="evidence" value="ECO:0000316"/>
    <property type="project" value="MGI"/>
</dbReference>
<dbReference type="GO" id="GO:0060271">
    <property type="term" value="P:cilium assembly"/>
    <property type="evidence" value="ECO:0000250"/>
    <property type="project" value="UniProtKB"/>
</dbReference>
<dbReference type="GO" id="GO:0007163">
    <property type="term" value="P:establishment or maintenance of cell polarity"/>
    <property type="evidence" value="ECO:0000316"/>
    <property type="project" value="MGI"/>
</dbReference>
<dbReference type="GO" id="GO:0051321">
    <property type="term" value="P:meiotic cell cycle"/>
    <property type="evidence" value="ECO:0000316"/>
    <property type="project" value="MGI"/>
</dbReference>
<dbReference type="GO" id="GO:0016344">
    <property type="term" value="P:meiotic chromosome movement towards spindle pole"/>
    <property type="evidence" value="ECO:0000316"/>
    <property type="project" value="MGI"/>
</dbReference>
<dbReference type="GO" id="GO:0033206">
    <property type="term" value="P:meiotic cytokinesis"/>
    <property type="evidence" value="ECO:0000316"/>
    <property type="project" value="MGI"/>
</dbReference>
<dbReference type="GO" id="GO:0030517">
    <property type="term" value="P:negative regulation of axon extension"/>
    <property type="evidence" value="ECO:0007669"/>
    <property type="project" value="Ensembl"/>
</dbReference>
<dbReference type="GO" id="GO:1904171">
    <property type="term" value="P:negative regulation of bleb assembly"/>
    <property type="evidence" value="ECO:0007669"/>
    <property type="project" value="Ensembl"/>
</dbReference>
<dbReference type="GO" id="GO:0030838">
    <property type="term" value="P:positive regulation of actin filament polymerization"/>
    <property type="evidence" value="ECO:0007669"/>
    <property type="project" value="Ensembl"/>
</dbReference>
<dbReference type="GO" id="GO:0048711">
    <property type="term" value="P:positive regulation of astrocyte differentiation"/>
    <property type="evidence" value="ECO:0007669"/>
    <property type="project" value="Ensembl"/>
</dbReference>
<dbReference type="GO" id="GO:0061003">
    <property type="term" value="P:positive regulation of dendritic spine morphogenesis"/>
    <property type="evidence" value="ECO:0007669"/>
    <property type="project" value="Ensembl"/>
</dbReference>
<dbReference type="GO" id="GO:0010763">
    <property type="term" value="P:positive regulation of fibroblast migration"/>
    <property type="evidence" value="ECO:0007669"/>
    <property type="project" value="Ensembl"/>
</dbReference>
<dbReference type="GO" id="GO:0051491">
    <property type="term" value="P:positive regulation of filopodium assembly"/>
    <property type="evidence" value="ECO:0007669"/>
    <property type="project" value="Ensembl"/>
</dbReference>
<dbReference type="GO" id="GO:0010592">
    <property type="term" value="P:positive regulation of lamellipodium assembly"/>
    <property type="evidence" value="ECO:0000250"/>
    <property type="project" value="UniProtKB"/>
</dbReference>
<dbReference type="GO" id="GO:0045666">
    <property type="term" value="P:positive regulation of neuron differentiation"/>
    <property type="evidence" value="ECO:0007669"/>
    <property type="project" value="Ensembl"/>
</dbReference>
<dbReference type="GO" id="GO:1903078">
    <property type="term" value="P:positive regulation of protein localization to plasma membrane"/>
    <property type="evidence" value="ECO:0007669"/>
    <property type="project" value="Ensembl"/>
</dbReference>
<dbReference type="GO" id="GO:0090314">
    <property type="term" value="P:positive regulation of protein targeting to membrane"/>
    <property type="evidence" value="ECO:0007669"/>
    <property type="project" value="Ensembl"/>
</dbReference>
<dbReference type="GO" id="GO:0051965">
    <property type="term" value="P:positive regulation of synapse assembly"/>
    <property type="evidence" value="ECO:0007669"/>
    <property type="project" value="Ensembl"/>
</dbReference>
<dbReference type="GO" id="GO:0045944">
    <property type="term" value="P:positive regulation of transcription by RNA polymerase II"/>
    <property type="evidence" value="ECO:0000250"/>
    <property type="project" value="UniProtKB"/>
</dbReference>
<dbReference type="GO" id="GO:0098974">
    <property type="term" value="P:postsynaptic actin cytoskeleton organization"/>
    <property type="evidence" value="ECO:0007669"/>
    <property type="project" value="Ensembl"/>
</dbReference>
<dbReference type="GO" id="GO:0043519">
    <property type="term" value="P:regulation of myosin II filament organization"/>
    <property type="evidence" value="ECO:0007669"/>
    <property type="project" value="Ensembl"/>
</dbReference>
<dbReference type="GO" id="GO:0032355">
    <property type="term" value="P:response to estradiol"/>
    <property type="evidence" value="ECO:0007669"/>
    <property type="project" value="Ensembl"/>
</dbReference>
<dbReference type="GO" id="GO:0071503">
    <property type="term" value="P:response to heparin"/>
    <property type="evidence" value="ECO:0007669"/>
    <property type="project" value="Ensembl"/>
</dbReference>
<dbReference type="GO" id="GO:0061843">
    <property type="term" value="P:Sertoli cell barrier remodeling"/>
    <property type="evidence" value="ECO:0007669"/>
    <property type="project" value="Ensembl"/>
</dbReference>
<dbReference type="GO" id="GO:0007283">
    <property type="term" value="P:spermatogenesis"/>
    <property type="evidence" value="ECO:0007669"/>
    <property type="project" value="Ensembl"/>
</dbReference>
<dbReference type="GO" id="GO:0051653">
    <property type="term" value="P:spindle localization"/>
    <property type="evidence" value="ECO:0000316"/>
    <property type="project" value="MGI"/>
</dbReference>
<dbReference type="CDD" id="cd10221">
    <property type="entry name" value="ASKHA_NBD_Arp3-like"/>
    <property type="match status" value="1"/>
</dbReference>
<dbReference type="FunFam" id="3.30.420.40:FF:000029">
    <property type="entry name" value="Actin-related protein 3"/>
    <property type="match status" value="1"/>
</dbReference>
<dbReference type="FunFam" id="3.30.420.40:FF:000315">
    <property type="entry name" value="Actin-related protein 3"/>
    <property type="match status" value="1"/>
</dbReference>
<dbReference type="FunFam" id="3.30.420.40:FF:000803">
    <property type="entry name" value="Actin-related protein 3"/>
    <property type="match status" value="1"/>
</dbReference>
<dbReference type="FunFam" id="3.90.640.10:FF:000006">
    <property type="entry name" value="Actin-related protein 3 (ARP3)"/>
    <property type="match status" value="1"/>
</dbReference>
<dbReference type="FunFam" id="2.30.36.70:FF:000002">
    <property type="entry name" value="actin-related protein 3 isoform X1"/>
    <property type="match status" value="1"/>
</dbReference>
<dbReference type="Gene3D" id="3.30.420.40">
    <property type="match status" value="2"/>
</dbReference>
<dbReference type="Gene3D" id="2.30.36.70">
    <property type="entry name" value="Actin, Chain A, domain 2"/>
    <property type="match status" value="1"/>
</dbReference>
<dbReference type="Gene3D" id="3.90.640.10">
    <property type="entry name" value="Actin, Chain A, domain 4"/>
    <property type="match status" value="1"/>
</dbReference>
<dbReference type="InterPro" id="IPR004000">
    <property type="entry name" value="Actin"/>
</dbReference>
<dbReference type="InterPro" id="IPR020902">
    <property type="entry name" value="Actin/actin-like_CS"/>
</dbReference>
<dbReference type="InterPro" id="IPR043129">
    <property type="entry name" value="ATPase_NBD"/>
</dbReference>
<dbReference type="PANTHER" id="PTHR11937">
    <property type="entry name" value="ACTIN"/>
    <property type="match status" value="1"/>
</dbReference>
<dbReference type="Pfam" id="PF00022">
    <property type="entry name" value="Actin"/>
    <property type="match status" value="2"/>
</dbReference>
<dbReference type="SMART" id="SM00268">
    <property type="entry name" value="ACTIN"/>
    <property type="match status" value="1"/>
</dbReference>
<dbReference type="SUPFAM" id="SSF53067">
    <property type="entry name" value="Actin-like ATPase domain"/>
    <property type="match status" value="2"/>
</dbReference>
<dbReference type="PROSITE" id="PS01132">
    <property type="entry name" value="ACTINS_ACT_LIKE"/>
    <property type="match status" value="1"/>
</dbReference>
<feature type="initiator methionine" description="Removed" evidence="1">
    <location>
        <position position="1"/>
    </location>
</feature>
<feature type="chain" id="PRO_0000089080" description="Actin-related protein 3">
    <location>
        <begin position="2"/>
        <end position="418"/>
    </location>
</feature>
<feature type="modified residue" description="N-acetylalanine" evidence="1">
    <location>
        <position position="2"/>
    </location>
</feature>
<feature type="modified residue" description="N6-acetyllysine" evidence="1">
    <location>
        <position position="240"/>
    </location>
</feature>
<feature type="modified residue" description="N6-acetyllysine" evidence="4">
    <location>
        <position position="244"/>
    </location>
</feature>
<feature type="modified residue" description="N6-acetyllysine" evidence="1">
    <location>
        <position position="251"/>
    </location>
</feature>
<feature type="modified residue" description="N6-acetyllysine" evidence="1">
    <location>
        <position position="254"/>
    </location>
</feature>
<feature type="sequence conflict" description="In Ref. 1; BAB23368." evidence="3" ref="1">
    <original>H</original>
    <variation>P</variation>
    <location>
        <position position="176"/>
    </location>
</feature>
<keyword id="KW-0002">3D-structure</keyword>
<keyword id="KW-0007">Acetylation</keyword>
<keyword id="KW-0009">Actin-binding</keyword>
<keyword id="KW-0067">ATP-binding</keyword>
<keyword id="KW-0966">Cell projection</keyword>
<keyword id="KW-0970">Cilium biogenesis/degradation</keyword>
<keyword id="KW-0963">Cytoplasm</keyword>
<keyword id="KW-0206">Cytoskeleton</keyword>
<keyword id="KW-0903">Direct protein sequencing</keyword>
<keyword id="KW-0547">Nucleotide-binding</keyword>
<keyword id="KW-0539">Nucleus</keyword>
<keyword id="KW-1185">Reference proteome</keyword>
<name>ARP3_MOUSE</name>
<comment type="function">
    <text evidence="1">ATP-binding component of the Arp2/3 complex, a multiprotein complex that mediates actin polymerization upon stimulation by nucleation-promoting factor (NPF). The Arp2/3 complex mediates the formation of branched actin networks in the cytoplasm, providing the force for cell motility. Seems to contact the pointed end of the daughter actin filament. In podocytes, required for the formation of lamellipodia downstream of AVIL and PLCE1 regulation. In addition to its role in the cytoplasmic cytoskeleton, the Arp2/3 complex also promotes actin polymerization in the nucleus, thereby regulating gene transcription and repair of damaged DNA. The Arp2/3 complex promotes homologous recombination (HR) repair in response to DNA damage by promoting nuclear actin polymerization, leading to drive motility of double-strand breaks (DSBs). Plays a role in ciliogenesis.</text>
</comment>
<comment type="subunit">
    <text evidence="1">Component of the Arp2/3 complex composed of ACTR2/ARP2, ACTR3/ARP3, ARPC1B/p41-ARC, ARPC2/p34-ARC, ARPC3/p21-ARC, ARPC4/p20-ARC and ARPC5/p16-ARC. Interacts with WHDC1. Interacts weakly with MEFV. Interacts with AVIL.</text>
</comment>
<comment type="subunit">
    <text evidence="2">(Microbial infection) Interacts with bacterium B.thailandensis BimA.</text>
</comment>
<comment type="interaction">
    <interactant intactId="EBI-773994">
        <id>Q99JY9</id>
    </interactant>
    <interactant intactId="EBI-397955">
        <id>Q60598</id>
        <label>Cttn</label>
    </interactant>
    <organismsDiffer>false</organismsDiffer>
    <experiments>5</experiments>
</comment>
<comment type="subcellular location">
    <subcellularLocation>
        <location evidence="1">Cytoplasm</location>
        <location evidence="1">Cytoskeleton</location>
    </subcellularLocation>
    <subcellularLocation>
        <location evidence="1">Cell projection</location>
    </subcellularLocation>
    <subcellularLocation>
        <location evidence="1">Nucleus</location>
    </subcellularLocation>
    <text evidence="1">In pre-apoptotic cells, colocalizes with MEFV in large specks (pyroptosomes).</text>
</comment>
<comment type="similarity">
    <text evidence="3">Belongs to the actin family. ARP3 subfamily.</text>
</comment>